<dbReference type="EMBL" id="CM004476">
    <property type="protein sequence ID" value="OCT77178.1"/>
    <property type="molecule type" value="Genomic_DNA"/>
</dbReference>
<dbReference type="SMR" id="A0A1L8G016"/>
<dbReference type="STRING" id="8355.A0A1L8G016"/>
<dbReference type="PaxDb" id="8355-A0A1L8G016"/>
<dbReference type="AGR" id="Xenbase:XB-GENE-6487993"/>
<dbReference type="Xenbase" id="XB-GENE-6487993">
    <property type="gene designation" value="dnaaf11.L"/>
</dbReference>
<dbReference type="OMA" id="QHRAVIV"/>
<dbReference type="Proteomes" id="UP000186698">
    <property type="component" value="Unplaced"/>
</dbReference>
<dbReference type="Proteomes" id="UP000694892">
    <property type="component" value="Chromosome 6L"/>
</dbReference>
<dbReference type="GO" id="GO:0005737">
    <property type="term" value="C:cytoplasm"/>
    <property type="evidence" value="ECO:0000318"/>
    <property type="project" value="GO_Central"/>
</dbReference>
<dbReference type="GO" id="GO:0005829">
    <property type="term" value="C:cytosol"/>
    <property type="evidence" value="ECO:0000250"/>
    <property type="project" value="UniProtKB"/>
</dbReference>
<dbReference type="GO" id="GO:0120293">
    <property type="term" value="C:dynein axonemal particle"/>
    <property type="evidence" value="ECO:0000314"/>
    <property type="project" value="UniProtKB"/>
</dbReference>
<dbReference type="GO" id="GO:0005576">
    <property type="term" value="C:extracellular region"/>
    <property type="evidence" value="ECO:0007669"/>
    <property type="project" value="GOC"/>
</dbReference>
<dbReference type="GO" id="GO:0031514">
    <property type="term" value="C:motile cilium"/>
    <property type="evidence" value="ECO:0007669"/>
    <property type="project" value="UniProtKB-SubCell"/>
</dbReference>
<dbReference type="GO" id="GO:0070286">
    <property type="term" value="P:axonemal dynein complex assembly"/>
    <property type="evidence" value="ECO:0000250"/>
    <property type="project" value="UniProtKB"/>
</dbReference>
<dbReference type="GO" id="GO:0090660">
    <property type="term" value="P:cerebrospinal fluid circulation"/>
    <property type="evidence" value="ECO:0000250"/>
    <property type="project" value="UniProtKB"/>
</dbReference>
<dbReference type="GO" id="GO:0060287">
    <property type="term" value="P:epithelial cilium movement involved in determination of left/right asymmetry"/>
    <property type="evidence" value="ECO:0000250"/>
    <property type="project" value="UniProtKB"/>
</dbReference>
<dbReference type="GO" id="GO:0003351">
    <property type="term" value="P:epithelial cilium movement involved in extracellular fluid movement"/>
    <property type="evidence" value="ECO:0000250"/>
    <property type="project" value="UniProtKB"/>
</dbReference>
<dbReference type="GO" id="GO:0051649">
    <property type="term" value="P:establishment of localization in cell"/>
    <property type="evidence" value="ECO:0000250"/>
    <property type="project" value="UniProtKB"/>
</dbReference>
<dbReference type="GO" id="GO:0030317">
    <property type="term" value="P:flagellated sperm motility"/>
    <property type="evidence" value="ECO:0000250"/>
    <property type="project" value="UniProtKB"/>
</dbReference>
<dbReference type="GO" id="GO:0036158">
    <property type="term" value="P:outer dynein arm assembly"/>
    <property type="evidence" value="ECO:0000250"/>
    <property type="project" value="UniProtKB"/>
</dbReference>
<dbReference type="GO" id="GO:0061512">
    <property type="term" value="P:protein localization to cilium"/>
    <property type="evidence" value="ECO:0000250"/>
    <property type="project" value="UniProtKB"/>
</dbReference>
<dbReference type="GO" id="GO:0120229">
    <property type="term" value="P:protein localization to motile cilium"/>
    <property type="evidence" value="ECO:0000250"/>
    <property type="project" value="UniProtKB"/>
</dbReference>
<dbReference type="FunFam" id="3.80.10.10:FF:000052">
    <property type="entry name" value="Leucine rich repeat containing 6"/>
    <property type="match status" value="1"/>
</dbReference>
<dbReference type="Gene3D" id="3.80.10.10">
    <property type="entry name" value="Ribonuclease Inhibitor"/>
    <property type="match status" value="1"/>
</dbReference>
<dbReference type="InterPro" id="IPR056496">
    <property type="entry name" value="CS_DNAAF11_C"/>
</dbReference>
<dbReference type="InterPro" id="IPR001611">
    <property type="entry name" value="Leu-rich_rpt"/>
</dbReference>
<dbReference type="InterPro" id="IPR032675">
    <property type="entry name" value="LRR_dom_sf"/>
</dbReference>
<dbReference type="InterPro" id="IPR003603">
    <property type="entry name" value="U2A'_phosphoprotein32A_C"/>
</dbReference>
<dbReference type="PANTHER" id="PTHR18849:SF0">
    <property type="entry name" value="CILIA- AND FLAGELLA-ASSOCIATED PROTEIN 410-RELATED"/>
    <property type="match status" value="1"/>
</dbReference>
<dbReference type="PANTHER" id="PTHR18849">
    <property type="entry name" value="LEUCINE RICH REPEAT PROTEIN"/>
    <property type="match status" value="1"/>
</dbReference>
<dbReference type="Pfam" id="PF23602">
    <property type="entry name" value="CS_DNAAF11_C"/>
    <property type="match status" value="1"/>
</dbReference>
<dbReference type="Pfam" id="PF14580">
    <property type="entry name" value="LRR_9"/>
    <property type="match status" value="1"/>
</dbReference>
<dbReference type="SMART" id="SM00365">
    <property type="entry name" value="LRR_SD22"/>
    <property type="match status" value="2"/>
</dbReference>
<dbReference type="SMART" id="SM00446">
    <property type="entry name" value="LRRcap"/>
    <property type="match status" value="1"/>
</dbReference>
<dbReference type="SUPFAM" id="SSF52058">
    <property type="entry name" value="L domain-like"/>
    <property type="match status" value="1"/>
</dbReference>
<dbReference type="PROSITE" id="PS51450">
    <property type="entry name" value="LRR"/>
    <property type="match status" value="5"/>
</dbReference>
<comment type="function">
    <text evidence="2">Involved in dynein arm assembly, is important for expression and transporting outer dynein arm (ODA) proteins from the cytoplasm to the cilia.</text>
</comment>
<comment type="subcellular location">
    <subcellularLocation>
        <location evidence="2">Cytoplasm</location>
    </subcellularLocation>
    <subcellularLocation>
        <location evidence="2">Cell projection</location>
        <location evidence="2">Cilium</location>
    </subcellularLocation>
    <subcellularLocation>
        <location evidence="5">Dynein axonemal particle</location>
    </subcellularLocation>
    <subcellularLocation>
        <location evidence="2">Cell projection</location>
        <location evidence="2">Cilium</location>
        <location evidence="2">Flagellum</location>
    </subcellularLocation>
    <text evidence="1">Localized to cytoplasmic puncta in ciliated cells. In the semicircular canal, localized to kinocilia (By similarity).</text>
</comment>
<comment type="similarity">
    <text evidence="6">Belongs to the tilB family.</text>
</comment>
<reference evidence="8" key="1">
    <citation type="journal article" date="2016" name="Nature">
        <title>Genome evolution in the allotetraploid frog Xenopus laevis.</title>
        <authorList>
            <person name="Session A.M."/>
            <person name="Uno Y."/>
            <person name="Kwon T."/>
            <person name="Chapman J.A."/>
            <person name="Toyoda A."/>
            <person name="Takahashi S."/>
            <person name="Fukui A."/>
            <person name="Hikosaka A."/>
            <person name="Suzuki A."/>
            <person name="Kondo M."/>
            <person name="van Heeringen S.J."/>
            <person name="Quigley I."/>
            <person name="Heinz S."/>
            <person name="Ogino H."/>
            <person name="Ochi H."/>
            <person name="Hellsten U."/>
            <person name="Lyons J.B."/>
            <person name="Simakov O."/>
            <person name="Putnam N."/>
            <person name="Stites J."/>
            <person name="Kuroki Y."/>
            <person name="Tanaka T."/>
            <person name="Michiue T."/>
            <person name="Watanabe M."/>
            <person name="Bogdanovic O."/>
            <person name="Lister R."/>
            <person name="Georgiou G."/>
            <person name="Paranjpe S.S."/>
            <person name="van Kruijsbergen I."/>
            <person name="Shu S."/>
            <person name="Carlson J."/>
            <person name="Kinoshita T."/>
            <person name="Ohta Y."/>
            <person name="Mawaribuchi S."/>
            <person name="Jenkins J."/>
            <person name="Grimwood J."/>
            <person name="Schmutz J."/>
            <person name="Mitros T."/>
            <person name="Mozaffari S.V."/>
            <person name="Suzuki Y."/>
            <person name="Haramoto Y."/>
            <person name="Yamamoto T.S."/>
            <person name="Takagi C."/>
            <person name="Heald R."/>
            <person name="Miller K."/>
            <person name="Haudenschild C."/>
            <person name="Kitzman J."/>
            <person name="Nakayama T."/>
            <person name="Izutsu Y."/>
            <person name="Robert J."/>
            <person name="Fortriede J."/>
            <person name="Burns K."/>
            <person name="Lotay V."/>
            <person name="Karimi K."/>
            <person name="Yasuoka Y."/>
            <person name="Dichmann D.S."/>
            <person name="Flajnik M.F."/>
            <person name="Houston D.W."/>
            <person name="Shendure J."/>
            <person name="DuPasquier L."/>
            <person name="Vize P.D."/>
            <person name="Zorn A.M."/>
            <person name="Ito M."/>
            <person name="Marcotte E.M."/>
            <person name="Wallingford J.B."/>
            <person name="Ito Y."/>
            <person name="Asashima M."/>
            <person name="Ueno N."/>
            <person name="Matsuda Y."/>
            <person name="Veenstra G.J."/>
            <person name="Fujiyama A."/>
            <person name="Harland R.M."/>
            <person name="Taira M."/>
            <person name="Rokhsar D.S."/>
        </authorList>
    </citation>
    <scope>NUCLEOTIDE SEQUENCE [LARGE SCALE GENOMIC DNA]</scope>
    <source>
        <strain evidence="8">J</strain>
    </source>
</reference>
<reference key="2">
    <citation type="journal article" date="2018" name="Elife">
        <title>A liquid-like organelle at the root of motile ciliopathy.</title>
        <authorList>
            <person name="Huizar R.L."/>
            <person name="Lee C."/>
            <person name="Boulgakov A.A."/>
            <person name="Horani A."/>
            <person name="Tu F."/>
            <person name="Marcotte E.M."/>
            <person name="Brody S.L."/>
            <person name="Wallingford J.B."/>
        </authorList>
    </citation>
    <scope>SUBCELLULAR LOCATION</scope>
</reference>
<reference key="3">
    <citation type="journal article" date="2020" name="Elife">
        <title>Functional partitioning of a liquid-like organelle during assembly of axonemal dyneins.</title>
        <authorList>
            <person name="Lee C."/>
            <person name="Cox R.M."/>
            <person name="Papoulas O."/>
            <person name="Horani A."/>
            <person name="Drew K."/>
            <person name="Devitt C.C."/>
            <person name="Brody S.L."/>
            <person name="Marcotte E.M."/>
            <person name="Wallingford J.B."/>
        </authorList>
    </citation>
    <scope>SUBCELLULAR LOCATION</scope>
</reference>
<protein>
    <recommendedName>
        <fullName evidence="6">Dynein axonemal assembly factor 11</fullName>
        <shortName evidence="6">DNAAF11</shortName>
    </recommendedName>
    <alternativeName>
        <fullName>Leucine-rich repeat-containing protein 6</fullName>
    </alternativeName>
    <alternativeName>
        <fullName>Protein tilB homolog</fullName>
    </alternativeName>
</protein>
<gene>
    <name type="primary">dnaaf11</name>
    <name type="synonym">lrrc6</name>
    <name evidence="7" type="ORF">XELAEV_18032374mg</name>
</gene>
<sequence length="469" mass="54340">MPTISEDLIRRRAEHNNCEIFSLEEISLHQQDLERIEHIDKWCRELKILYLQNNLIGKIENVSKLKKLEYLNLALNNIEKIENLEGCESLQKLDLTVNFVGELSSINSLQENLHLRELYLVGNPCAEYEGYRQYVVATLPQLKWLDGKEIERSERIQALQDYPQVQGRMKEQQEAYLRKRAAEREEARSKLQGKQKESRKTQEKKPGFDRRWYTDINNTIPDPVEKPDPTEQNGDETALRKAEEEEEKEFWSQPSQYTPESRLETHRYLEEKRKSKESSSEGELKKKPPRTLITAEGRVLNVNESKLDFSLVDDEENNQFVLDLAIYRHLDTSLVDVDVQPSYIKVLVKEKPFQLVLPAEVKPDSSSAKRSQTTGHLVVTMPKAIGVIQTKRAKSPVVEEQTRKNPPKCSKTFEKLEVDPKACSVPDFANIVQEKKTQAQGPLQFHKNKVKDTEDSEDFIDNTDVPPLM</sequence>
<keyword id="KW-0966">Cell projection</keyword>
<keyword id="KW-0969">Cilium</keyword>
<keyword id="KW-0175">Coiled coil</keyword>
<keyword id="KW-0963">Cytoplasm</keyword>
<keyword id="KW-0282">Flagellum</keyword>
<keyword id="KW-0433">Leucine-rich repeat</keyword>
<keyword id="KW-1185">Reference proteome</keyword>
<keyword id="KW-0677">Repeat</keyword>
<accession>A0A1L8G016</accession>
<name>DAA11_XENLA</name>
<evidence type="ECO:0000250" key="1">
    <source>
        <dbReference type="UniProtKB" id="B3DH20"/>
    </source>
</evidence>
<evidence type="ECO:0000250" key="2">
    <source>
        <dbReference type="UniProtKB" id="Q86X45"/>
    </source>
</evidence>
<evidence type="ECO:0000255" key="3"/>
<evidence type="ECO:0000256" key="4">
    <source>
        <dbReference type="SAM" id="MobiDB-lite"/>
    </source>
</evidence>
<evidence type="ECO:0000269" key="5">
    <source>
    </source>
</evidence>
<evidence type="ECO:0000305" key="6"/>
<evidence type="ECO:0000312" key="7">
    <source>
        <dbReference type="EMBL" id="OCT77178.1"/>
    </source>
</evidence>
<evidence type="ECO:0000312" key="8">
    <source>
        <dbReference type="Proteomes" id="UP000186698"/>
    </source>
</evidence>
<feature type="chain" id="PRO_0000452439" description="Dynein axonemal assembly factor 11">
    <location>
        <begin position="1"/>
        <end position="469"/>
    </location>
</feature>
<feature type="repeat" description="LRR 1" evidence="3">
    <location>
        <begin position="20"/>
        <end position="43"/>
    </location>
</feature>
<feature type="repeat" description="LRR 2" evidence="3">
    <location>
        <begin position="44"/>
        <end position="65"/>
    </location>
</feature>
<feature type="repeat" description="LRR 3" evidence="3">
    <location>
        <begin position="66"/>
        <end position="89"/>
    </location>
</feature>
<feature type="repeat" description="LRR 4" evidence="3">
    <location>
        <begin position="90"/>
        <end position="110"/>
    </location>
</feature>
<feature type="domain" description="LRRCT" evidence="3">
    <location>
        <begin position="114"/>
        <end position="135"/>
    </location>
</feature>
<feature type="region of interest" description="Disordered" evidence="4">
    <location>
        <begin position="179"/>
        <end position="290"/>
    </location>
</feature>
<feature type="region of interest" description="Disordered" evidence="4">
    <location>
        <begin position="436"/>
        <end position="469"/>
    </location>
</feature>
<feature type="compositionally biased region" description="Basic and acidic residues" evidence="4">
    <location>
        <begin position="179"/>
        <end position="213"/>
    </location>
</feature>
<feature type="compositionally biased region" description="Basic and acidic residues" evidence="4">
    <location>
        <begin position="261"/>
        <end position="286"/>
    </location>
</feature>
<proteinExistence type="inferred from homology"/>
<organism evidence="7">
    <name type="scientific">Xenopus laevis</name>
    <name type="common">African clawed frog</name>
    <dbReference type="NCBI Taxonomy" id="8355"/>
    <lineage>
        <taxon>Eukaryota</taxon>
        <taxon>Metazoa</taxon>
        <taxon>Chordata</taxon>
        <taxon>Craniata</taxon>
        <taxon>Vertebrata</taxon>
        <taxon>Euteleostomi</taxon>
        <taxon>Amphibia</taxon>
        <taxon>Batrachia</taxon>
        <taxon>Anura</taxon>
        <taxon>Pipoidea</taxon>
        <taxon>Pipidae</taxon>
        <taxon>Xenopodinae</taxon>
        <taxon>Xenopus</taxon>
        <taxon>Xenopus</taxon>
    </lineage>
</organism>